<sequence>MGGNLGCHRSIPKDPTDFCQGKRKFSAACNFSNILVNQERLNINTATEEELMTLPGVNRGVAQNIVEYRDCIGGFKKVEDLALVSGVGATKLEAIKLEICVSSKNSSSNHSPSSLRKEHEHLPCTGVNINTATPPQLMSVRGITEKIAKNIVEFRSVHGPFKSIEDLVKVANINSSLLDRIRFQVFVERSRTPSTNTNGGFTHPSPTSFSVQSDEPDVPLGGPPLVTSVRPCVEPPAGTRDGKPVVRVATWNLQRCSSEKANNPGVKEVVCMTLLENDIKLLAVQDLADREALDKFCAELNQPTLCSVRRWKSARGLWKCAVSEKPNGVSNSAPEFSGFLWDCSSGIEMKDSAVLESFTTNGNGNPHPQPYLGHFYIGSSELTLVNVLLTAAPSPTENKRKSTSDDLKTHKLSSGVQETLKGERDLLVMGHFGVAPDSSEMEILRKEKLSALLAPSVFTNISTRTPQGSRSLDNIWASRSLRKTYTGQCSVVREGLTNPWIPDNWSWGGVASEHCPVVAEFFLDVLKERLCSGPAMPVVERGDSMSKHER</sequence>
<keyword id="KW-1185">Reference proteome</keyword>
<feature type="chain" id="PRO_0000317264" description="Endonuclease/exonuclease/phosphatase family domain-containing protein 1">
    <location>
        <begin position="1"/>
        <end position="550"/>
    </location>
</feature>
<feature type="domain" description="HhH">
    <location>
        <begin position="39"/>
        <end position="68"/>
    </location>
</feature>
<feature type="region of interest" description="Disordered" evidence="1">
    <location>
        <begin position="194"/>
        <end position="216"/>
    </location>
</feature>
<feature type="compositionally biased region" description="Polar residues" evidence="1">
    <location>
        <begin position="194"/>
        <end position="213"/>
    </location>
</feature>
<feature type="sequence conflict" description="In Ref. 2; AAH65655." evidence="2" ref="2">
    <original>S</original>
    <variation>F</variation>
    <location>
        <position position="344"/>
    </location>
</feature>
<feature type="sequence conflict" description="In Ref. 2; AAH65655." evidence="2" ref="2">
    <original>S</original>
    <variation>G</variation>
    <location>
        <position position="413"/>
    </location>
</feature>
<feature type="sequence conflict" description="In Ref. 2; AAH65655." evidence="2" ref="2">
    <original>M</original>
    <variation>L</variation>
    <location>
        <position position="429"/>
    </location>
</feature>
<organism>
    <name type="scientific">Danio rerio</name>
    <name type="common">Zebrafish</name>
    <name type="synonym">Brachydanio rerio</name>
    <dbReference type="NCBI Taxonomy" id="7955"/>
    <lineage>
        <taxon>Eukaryota</taxon>
        <taxon>Metazoa</taxon>
        <taxon>Chordata</taxon>
        <taxon>Craniata</taxon>
        <taxon>Vertebrata</taxon>
        <taxon>Euteleostomi</taxon>
        <taxon>Actinopterygii</taxon>
        <taxon>Neopterygii</taxon>
        <taxon>Teleostei</taxon>
        <taxon>Ostariophysi</taxon>
        <taxon>Cypriniformes</taxon>
        <taxon>Danionidae</taxon>
        <taxon>Danioninae</taxon>
        <taxon>Danio</taxon>
    </lineage>
</organism>
<gene>
    <name type="primary">eepd1</name>
    <name type="ORF">zgc:77395</name>
</gene>
<name>EEPD1_DANRE</name>
<proteinExistence type="evidence at transcript level"/>
<protein>
    <recommendedName>
        <fullName>Endonuclease/exonuclease/phosphatase family domain-containing protein 1</fullName>
    </recommendedName>
</protein>
<dbReference type="EMBL" id="AY422999">
    <property type="protein sequence ID" value="AAQ97975.1"/>
    <property type="molecule type" value="mRNA"/>
</dbReference>
<dbReference type="EMBL" id="BC065655">
    <property type="protein sequence ID" value="AAH65655.1"/>
    <property type="molecule type" value="mRNA"/>
</dbReference>
<dbReference type="RefSeq" id="NP_991322.1">
    <property type="nucleotide sequence ID" value="NM_205759.1"/>
</dbReference>
<dbReference type="FunCoup" id="Q6TEQ0">
    <property type="interactions" value="372"/>
</dbReference>
<dbReference type="STRING" id="7955.ENSDARP00000095703"/>
<dbReference type="PaxDb" id="7955-ENSDARP00000095703"/>
<dbReference type="GeneID" id="402965"/>
<dbReference type="KEGG" id="dre:402965"/>
<dbReference type="AGR" id="ZFIN:ZDB-GENE-040426-1831"/>
<dbReference type="CTD" id="80820"/>
<dbReference type="ZFIN" id="ZDB-GENE-040426-1831">
    <property type="gene designation" value="eepd1"/>
</dbReference>
<dbReference type="eggNOG" id="KOG1857">
    <property type="taxonomic scope" value="Eukaryota"/>
</dbReference>
<dbReference type="InParanoid" id="Q6TEQ0"/>
<dbReference type="OrthoDB" id="6237065at2759"/>
<dbReference type="PhylomeDB" id="Q6TEQ0"/>
<dbReference type="PRO" id="PR:Q6TEQ0"/>
<dbReference type="Proteomes" id="UP000000437">
    <property type="component" value="Chromosome 19"/>
</dbReference>
<dbReference type="GO" id="GO:0005886">
    <property type="term" value="C:plasma membrane"/>
    <property type="evidence" value="ECO:0000318"/>
    <property type="project" value="GO_Central"/>
</dbReference>
<dbReference type="GO" id="GO:0003677">
    <property type="term" value="F:DNA binding"/>
    <property type="evidence" value="ECO:0007669"/>
    <property type="project" value="InterPro"/>
</dbReference>
<dbReference type="GO" id="GO:0006281">
    <property type="term" value="P:DNA repair"/>
    <property type="evidence" value="ECO:0007669"/>
    <property type="project" value="InterPro"/>
</dbReference>
<dbReference type="CDD" id="cd10283">
    <property type="entry name" value="MnuA_DNase1-like"/>
    <property type="match status" value="1"/>
</dbReference>
<dbReference type="Gene3D" id="1.10.150.280">
    <property type="entry name" value="AF1531-like domain"/>
    <property type="match status" value="1"/>
</dbReference>
<dbReference type="Gene3D" id="3.60.10.10">
    <property type="entry name" value="Endonuclease/exonuclease/phosphatase"/>
    <property type="match status" value="1"/>
</dbReference>
<dbReference type="Gene3D" id="1.10.150.320">
    <property type="entry name" value="Photosystem II 12 kDa extrinsic protein"/>
    <property type="match status" value="1"/>
</dbReference>
<dbReference type="InterPro" id="IPR051675">
    <property type="entry name" value="Endo/Exo/Phosphatase_dom_1"/>
</dbReference>
<dbReference type="InterPro" id="IPR036691">
    <property type="entry name" value="Endo/exonu/phosph_ase_sf"/>
</dbReference>
<dbReference type="InterPro" id="IPR003583">
    <property type="entry name" value="Hlx-hairpin-Hlx_DNA-bd_motif"/>
</dbReference>
<dbReference type="InterPro" id="IPR010994">
    <property type="entry name" value="RuvA_2-like"/>
</dbReference>
<dbReference type="PANTHER" id="PTHR21180">
    <property type="entry name" value="ENDONUCLEASE/EXONUCLEASE/PHOSPHATASE FAMILY DOMAIN-CONTAINING PROTEIN 1"/>
    <property type="match status" value="1"/>
</dbReference>
<dbReference type="PANTHER" id="PTHR21180:SF32">
    <property type="entry name" value="ENDONUCLEASE_EXONUCLEASE_PHOSPHATASE FAMILY DOMAIN-CONTAINING PROTEIN 1"/>
    <property type="match status" value="1"/>
</dbReference>
<dbReference type="Pfam" id="PF12836">
    <property type="entry name" value="HHH_3"/>
    <property type="match status" value="2"/>
</dbReference>
<dbReference type="SMART" id="SM00278">
    <property type="entry name" value="HhH1"/>
    <property type="match status" value="3"/>
</dbReference>
<dbReference type="SUPFAM" id="SSF56219">
    <property type="entry name" value="DNase I-like"/>
    <property type="match status" value="1"/>
</dbReference>
<dbReference type="SUPFAM" id="SSF47781">
    <property type="entry name" value="RuvA domain 2-like"/>
    <property type="match status" value="2"/>
</dbReference>
<evidence type="ECO:0000256" key="1">
    <source>
        <dbReference type="SAM" id="MobiDB-lite"/>
    </source>
</evidence>
<evidence type="ECO:0000305" key="2"/>
<accession>Q6TEQ0</accession>
<accession>Q6P0E2</accession>
<reference key="1">
    <citation type="journal article" date="2004" name="Proc. Natl. Acad. Sci. U.S.A.">
        <title>Hematopoietic gene expression profile in zebrafish kidney marrow.</title>
        <authorList>
            <person name="Song H.-D."/>
            <person name="Sun X.-J."/>
            <person name="Deng M."/>
            <person name="Zhang G.-W."/>
            <person name="Zhou Y."/>
            <person name="Wu X.-Y."/>
            <person name="Sheng Y."/>
            <person name="Chen Y."/>
            <person name="Ruan Z."/>
            <person name="Jiang C.-L."/>
            <person name="Fan H.-Y."/>
            <person name="Zon L.I."/>
            <person name="Kanki J.P."/>
            <person name="Liu T.X."/>
            <person name="Look A.T."/>
            <person name="Chen Z."/>
        </authorList>
    </citation>
    <scope>NUCLEOTIDE SEQUENCE [LARGE SCALE MRNA]</scope>
    <source>
        <tissue>Kidney marrow</tissue>
    </source>
</reference>
<reference key="2">
    <citation type="submission" date="2004-01" db="EMBL/GenBank/DDBJ databases">
        <authorList>
            <consortium name="NIH - Zebrafish Gene Collection (ZGC) project"/>
        </authorList>
    </citation>
    <scope>NUCLEOTIDE SEQUENCE [LARGE SCALE MRNA]</scope>
    <source>
        <tissue>Embryo</tissue>
    </source>
</reference>